<protein>
    <recommendedName>
        <fullName>Uncharacterized protein MJ1128</fullName>
    </recommendedName>
</protein>
<evidence type="ECO:0000255" key="1"/>
<keyword id="KW-1185">Reference proteome</keyword>
<keyword id="KW-0732">Signal</keyword>
<name>Y1128_METJA</name>
<accession>Q58528</accession>
<feature type="signal peptide" evidence="1">
    <location>
        <begin position="1"/>
        <end position="28"/>
    </location>
</feature>
<feature type="chain" id="PRO_0000014008" description="Uncharacterized protein MJ1128">
    <location>
        <begin position="29"/>
        <end position="308"/>
    </location>
</feature>
<dbReference type="EMBL" id="L77117">
    <property type="protein sequence ID" value="AAB99130.1"/>
    <property type="molecule type" value="Genomic_DNA"/>
</dbReference>
<dbReference type="PIR" id="G64440">
    <property type="entry name" value="G64440"/>
</dbReference>
<dbReference type="SMR" id="Q58528"/>
<dbReference type="STRING" id="243232.MJ_1128"/>
<dbReference type="PaxDb" id="243232-MJ_1128"/>
<dbReference type="DNASU" id="1452024"/>
<dbReference type="EnsemblBacteria" id="AAB99130">
    <property type="protein sequence ID" value="AAB99130"/>
    <property type="gene ID" value="MJ_1128"/>
</dbReference>
<dbReference type="KEGG" id="mja:MJ_1128"/>
<dbReference type="eggNOG" id="arCOG07790">
    <property type="taxonomic scope" value="Archaea"/>
</dbReference>
<dbReference type="HOGENOM" id="CLU_910928_0_0_2"/>
<dbReference type="InParanoid" id="Q58528"/>
<dbReference type="Proteomes" id="UP000000805">
    <property type="component" value="Chromosome"/>
</dbReference>
<dbReference type="GO" id="GO:0047464">
    <property type="term" value="F:heparosan-N-sulfate-glucuronate 5-epimerase activity"/>
    <property type="evidence" value="ECO:0000318"/>
    <property type="project" value="GO_Central"/>
</dbReference>
<dbReference type="GO" id="GO:0005975">
    <property type="term" value="P:carbohydrate metabolic process"/>
    <property type="evidence" value="ECO:0007669"/>
    <property type="project" value="InterPro"/>
</dbReference>
<dbReference type="GO" id="GO:0015012">
    <property type="term" value="P:heparan sulfate proteoglycan biosynthetic process"/>
    <property type="evidence" value="ECO:0000318"/>
    <property type="project" value="GO_Central"/>
</dbReference>
<dbReference type="InterPro" id="IPR008928">
    <property type="entry name" value="6-hairpin_glycosidase_sf"/>
</dbReference>
<dbReference type="InterPro" id="IPR010598">
    <property type="entry name" value="C5-epim_C"/>
</dbReference>
<dbReference type="InterPro" id="IPR039721">
    <property type="entry name" value="C5-epimerase"/>
</dbReference>
<dbReference type="PANTHER" id="PTHR13174">
    <property type="entry name" value="D-GLUCURONYL C5-EPIMERASE"/>
    <property type="match status" value="1"/>
</dbReference>
<dbReference type="PANTHER" id="PTHR13174:SF3">
    <property type="entry name" value="D-GLUCURONYL C5-EPIMERASE"/>
    <property type="match status" value="1"/>
</dbReference>
<dbReference type="Pfam" id="PF06662">
    <property type="entry name" value="C5-epim_C"/>
    <property type="match status" value="1"/>
</dbReference>
<dbReference type="SUPFAM" id="SSF48208">
    <property type="entry name" value="Six-hairpin glycosidases"/>
    <property type="match status" value="1"/>
</dbReference>
<organism>
    <name type="scientific">Methanocaldococcus jannaschii (strain ATCC 43067 / DSM 2661 / JAL-1 / JCM 10045 / NBRC 100440)</name>
    <name type="common">Methanococcus jannaschii</name>
    <dbReference type="NCBI Taxonomy" id="243232"/>
    <lineage>
        <taxon>Archaea</taxon>
        <taxon>Methanobacteriati</taxon>
        <taxon>Methanobacteriota</taxon>
        <taxon>Methanomada group</taxon>
        <taxon>Methanococci</taxon>
        <taxon>Methanococcales</taxon>
        <taxon>Methanocaldococcaceae</taxon>
        <taxon>Methanocaldococcus</taxon>
    </lineage>
</organism>
<gene>
    <name type="ordered locus">MJ1128</name>
</gene>
<proteinExistence type="inferred from homology"/>
<sequence>MILMKKFEIILFLFIAVLIFVFGYFVGASQPLYSENPVIQYFKNPKPFTVENVNMPVTYYGTICGKYIGYQITPHNVNEEARKCFYKYFKLKDKNPKEAERYLKRGLFLTEYLISQADKETAEVDEKNITFIVWRYNFEFPLYNLSKGWRGALCQAGCLKTLYLAYEATGDERYLNYANLAINAFKVPVEKGGLLKIRIYKNKSYYWFPEYASENPPYVLNGFITATLWIGDFGNKTGNADALYLYKEGLKSIKTFLPMYDAGDWSYYDALGHRCNKHYEHLHRLQMLWLYNKTGDEIYLKYYKKWRE</sequence>
<reference key="1">
    <citation type="journal article" date="1996" name="Science">
        <title>Complete genome sequence of the methanogenic archaeon, Methanococcus jannaschii.</title>
        <authorList>
            <person name="Bult C.J."/>
            <person name="White O."/>
            <person name="Olsen G.J."/>
            <person name="Zhou L."/>
            <person name="Fleischmann R.D."/>
            <person name="Sutton G.G."/>
            <person name="Blake J.A."/>
            <person name="FitzGerald L.M."/>
            <person name="Clayton R.A."/>
            <person name="Gocayne J.D."/>
            <person name="Kerlavage A.R."/>
            <person name="Dougherty B.A."/>
            <person name="Tomb J.-F."/>
            <person name="Adams M.D."/>
            <person name="Reich C.I."/>
            <person name="Overbeek R."/>
            <person name="Kirkness E.F."/>
            <person name="Weinstock K.G."/>
            <person name="Merrick J.M."/>
            <person name="Glodek A."/>
            <person name="Scott J.L."/>
            <person name="Geoghagen N.S.M."/>
            <person name="Weidman J.F."/>
            <person name="Fuhrmann J.L."/>
            <person name="Nguyen D."/>
            <person name="Utterback T.R."/>
            <person name="Kelley J.M."/>
            <person name="Peterson J.D."/>
            <person name="Sadow P.W."/>
            <person name="Hanna M.C."/>
            <person name="Cotton M.D."/>
            <person name="Roberts K.M."/>
            <person name="Hurst M.A."/>
            <person name="Kaine B.P."/>
            <person name="Borodovsky M."/>
            <person name="Klenk H.-P."/>
            <person name="Fraser C.M."/>
            <person name="Smith H.O."/>
            <person name="Woese C.R."/>
            <person name="Venter J.C."/>
        </authorList>
    </citation>
    <scope>NUCLEOTIDE SEQUENCE [LARGE SCALE GENOMIC DNA]</scope>
    <source>
        <strain>ATCC 43067 / DSM 2661 / JAL-1 / JCM 10045 / NBRC 100440</strain>
    </source>
</reference>